<dbReference type="EC" id="6.1.1.6" evidence="1"/>
<dbReference type="EMBL" id="BX248583">
    <property type="protein sequence ID" value="CAD83333.1"/>
    <property type="molecule type" value="Genomic_DNA"/>
</dbReference>
<dbReference type="SMR" id="Q7VRF5"/>
<dbReference type="STRING" id="203907.Bfl262"/>
<dbReference type="KEGG" id="bfl:Bfl262"/>
<dbReference type="eggNOG" id="COG1190">
    <property type="taxonomic scope" value="Bacteria"/>
</dbReference>
<dbReference type="HOGENOM" id="CLU_008255_6_0_6"/>
<dbReference type="OrthoDB" id="9801152at2"/>
<dbReference type="Proteomes" id="UP000002192">
    <property type="component" value="Chromosome"/>
</dbReference>
<dbReference type="GO" id="GO:0005829">
    <property type="term" value="C:cytosol"/>
    <property type="evidence" value="ECO:0007669"/>
    <property type="project" value="TreeGrafter"/>
</dbReference>
<dbReference type="GO" id="GO:0005524">
    <property type="term" value="F:ATP binding"/>
    <property type="evidence" value="ECO:0007669"/>
    <property type="project" value="UniProtKB-UniRule"/>
</dbReference>
<dbReference type="GO" id="GO:0004824">
    <property type="term" value="F:lysine-tRNA ligase activity"/>
    <property type="evidence" value="ECO:0007669"/>
    <property type="project" value="UniProtKB-UniRule"/>
</dbReference>
<dbReference type="GO" id="GO:0000287">
    <property type="term" value="F:magnesium ion binding"/>
    <property type="evidence" value="ECO:0007669"/>
    <property type="project" value="UniProtKB-UniRule"/>
</dbReference>
<dbReference type="GO" id="GO:0000049">
    <property type="term" value="F:tRNA binding"/>
    <property type="evidence" value="ECO:0007669"/>
    <property type="project" value="TreeGrafter"/>
</dbReference>
<dbReference type="GO" id="GO:0006430">
    <property type="term" value="P:lysyl-tRNA aminoacylation"/>
    <property type="evidence" value="ECO:0007669"/>
    <property type="project" value="UniProtKB-UniRule"/>
</dbReference>
<dbReference type="CDD" id="cd00775">
    <property type="entry name" value="LysRS_core"/>
    <property type="match status" value="1"/>
</dbReference>
<dbReference type="CDD" id="cd04322">
    <property type="entry name" value="LysRS_N"/>
    <property type="match status" value="1"/>
</dbReference>
<dbReference type="FunFam" id="2.40.50.140:FF:000024">
    <property type="entry name" value="Lysine--tRNA ligase"/>
    <property type="match status" value="1"/>
</dbReference>
<dbReference type="Gene3D" id="3.30.930.10">
    <property type="entry name" value="Bira Bifunctional Protein, Domain 2"/>
    <property type="match status" value="1"/>
</dbReference>
<dbReference type="Gene3D" id="2.40.50.140">
    <property type="entry name" value="Nucleic acid-binding proteins"/>
    <property type="match status" value="1"/>
</dbReference>
<dbReference type="HAMAP" id="MF_00252">
    <property type="entry name" value="Lys_tRNA_synth_class2"/>
    <property type="match status" value="1"/>
</dbReference>
<dbReference type="InterPro" id="IPR004364">
    <property type="entry name" value="Aa-tRNA-synt_II"/>
</dbReference>
<dbReference type="InterPro" id="IPR006195">
    <property type="entry name" value="aa-tRNA-synth_II"/>
</dbReference>
<dbReference type="InterPro" id="IPR045864">
    <property type="entry name" value="aa-tRNA-synth_II/BPL/LPL"/>
</dbReference>
<dbReference type="InterPro" id="IPR002313">
    <property type="entry name" value="Lys-tRNA-ligase_II"/>
</dbReference>
<dbReference type="InterPro" id="IPR044136">
    <property type="entry name" value="Lys-tRNA-ligase_II_N"/>
</dbReference>
<dbReference type="InterPro" id="IPR018149">
    <property type="entry name" value="Lys-tRNA-synth_II_C"/>
</dbReference>
<dbReference type="InterPro" id="IPR012340">
    <property type="entry name" value="NA-bd_OB-fold"/>
</dbReference>
<dbReference type="InterPro" id="IPR004365">
    <property type="entry name" value="NA-bd_OB_tRNA"/>
</dbReference>
<dbReference type="NCBIfam" id="TIGR00499">
    <property type="entry name" value="lysS_bact"/>
    <property type="match status" value="1"/>
</dbReference>
<dbReference type="NCBIfam" id="NF001756">
    <property type="entry name" value="PRK00484.1"/>
    <property type="match status" value="1"/>
</dbReference>
<dbReference type="PANTHER" id="PTHR42918:SF15">
    <property type="entry name" value="LYSINE--TRNA LIGASE, CHLOROPLASTIC_MITOCHONDRIAL"/>
    <property type="match status" value="1"/>
</dbReference>
<dbReference type="PANTHER" id="PTHR42918">
    <property type="entry name" value="LYSYL-TRNA SYNTHETASE"/>
    <property type="match status" value="1"/>
</dbReference>
<dbReference type="Pfam" id="PF00152">
    <property type="entry name" value="tRNA-synt_2"/>
    <property type="match status" value="1"/>
</dbReference>
<dbReference type="Pfam" id="PF01336">
    <property type="entry name" value="tRNA_anti-codon"/>
    <property type="match status" value="1"/>
</dbReference>
<dbReference type="PRINTS" id="PR00982">
    <property type="entry name" value="TRNASYNTHLYS"/>
</dbReference>
<dbReference type="SUPFAM" id="SSF55681">
    <property type="entry name" value="Class II aaRS and biotin synthetases"/>
    <property type="match status" value="1"/>
</dbReference>
<dbReference type="SUPFAM" id="SSF50249">
    <property type="entry name" value="Nucleic acid-binding proteins"/>
    <property type="match status" value="1"/>
</dbReference>
<dbReference type="PROSITE" id="PS50862">
    <property type="entry name" value="AA_TRNA_LIGASE_II"/>
    <property type="match status" value="1"/>
</dbReference>
<accession>Q7VRF5</accession>
<feature type="chain" id="PRO_0000152610" description="Lysine--tRNA ligase">
    <location>
        <begin position="1"/>
        <end position="485"/>
    </location>
</feature>
<feature type="binding site" evidence="1">
    <location>
        <position position="391"/>
    </location>
    <ligand>
        <name>Mg(2+)</name>
        <dbReference type="ChEBI" id="CHEBI:18420"/>
        <label>1</label>
    </ligand>
</feature>
<feature type="binding site" evidence="1">
    <location>
        <position position="398"/>
    </location>
    <ligand>
        <name>Mg(2+)</name>
        <dbReference type="ChEBI" id="CHEBI:18420"/>
        <label>1</label>
    </ligand>
</feature>
<feature type="binding site" evidence="1">
    <location>
        <position position="398"/>
    </location>
    <ligand>
        <name>Mg(2+)</name>
        <dbReference type="ChEBI" id="CHEBI:18420"/>
        <label>2</label>
    </ligand>
</feature>
<gene>
    <name evidence="1" type="primary">lysS</name>
    <name type="ordered locus">Bfl262</name>
</gene>
<protein>
    <recommendedName>
        <fullName evidence="1">Lysine--tRNA ligase</fullName>
        <ecNumber evidence="1">6.1.1.6</ecNumber>
    </recommendedName>
    <alternativeName>
        <fullName evidence="1">Lysyl-tRNA synthetase</fullName>
        <shortName evidence="1">LysRS</shortName>
    </alternativeName>
</protein>
<proteinExistence type="inferred from homology"/>
<organism>
    <name type="scientific">Blochmanniella floridana</name>
    <dbReference type="NCBI Taxonomy" id="203907"/>
    <lineage>
        <taxon>Bacteria</taxon>
        <taxon>Pseudomonadati</taxon>
        <taxon>Pseudomonadota</taxon>
        <taxon>Gammaproteobacteria</taxon>
        <taxon>Enterobacterales</taxon>
        <taxon>Enterobacteriaceae</taxon>
        <taxon>ant endosymbionts</taxon>
        <taxon>Candidatus Blochmanniella</taxon>
    </lineage>
</organism>
<name>SYK_BLOFL</name>
<reference key="1">
    <citation type="journal article" date="2003" name="Proc. Natl. Acad. Sci. U.S.A.">
        <title>The genome sequence of Blochmannia floridanus: comparative analysis of reduced genomes.</title>
        <authorList>
            <person name="Gil R."/>
            <person name="Silva F.J."/>
            <person name="Zientz E."/>
            <person name="Delmotte F."/>
            <person name="Gonzalez-Candelas F."/>
            <person name="Latorre A."/>
            <person name="Rausell C."/>
            <person name="Kamerbeek J."/>
            <person name="Gadau J."/>
            <person name="Hoelldobler B."/>
            <person name="van Ham R.C.H.J."/>
            <person name="Gross R."/>
            <person name="Moya A."/>
        </authorList>
    </citation>
    <scope>NUCLEOTIDE SEQUENCE [LARGE SCALE GENOMIC DNA]</scope>
</reference>
<keyword id="KW-0030">Aminoacyl-tRNA synthetase</keyword>
<keyword id="KW-0067">ATP-binding</keyword>
<keyword id="KW-0963">Cytoplasm</keyword>
<keyword id="KW-0436">Ligase</keyword>
<keyword id="KW-0460">Magnesium</keyword>
<keyword id="KW-0479">Metal-binding</keyword>
<keyword id="KW-0547">Nucleotide-binding</keyword>
<keyword id="KW-0648">Protein biosynthesis</keyword>
<keyword id="KW-1185">Reference proteome</keyword>
<sequence length="485" mass="57075">MSKFEKEQIAFPNDFRRNYISDQLHQKYDHKTNTELIHLNVKVSVAGRIMTRRIMGKSSFMTLRDGGGCIQLYFTIHDMKSQTMYFKVIKTWDIGDLIGVKGVLFKTRTGELSIHCKEMVLLTKSLRSLPDKFHGLRNIETKYRQRYLDLIVNEESMKTFKIRSLIISEIRRFMHQHHFIEVETPMMHHIPGGALARPFVTYHNKLNMNMYLRIAPELYLKKLIIGGFEKIFEINRNFRNESISPYHNPEFTMMEIYEAYVDYNNMIIFVQELFRTLTERILRKSVIEYGDYSLDFEKPFIKMSIKEAIMYYLPDIRTKNIDDILVVFDILKFFKVPSDNQWTLEKLHMVLFEEIVSKKIIQPTCITHYPIEVSPLARCSNDNAKIADRFELFIAGHEIGNGFSELNDPDDQRNRFLKQATEKMINNDIDQDESNMPYDKDYIVALEYGLPPTAGVGIGIDRLVMLLTNKHNIRDVILFPTLRSK</sequence>
<comment type="catalytic activity">
    <reaction evidence="1">
        <text>tRNA(Lys) + L-lysine + ATP = L-lysyl-tRNA(Lys) + AMP + diphosphate</text>
        <dbReference type="Rhea" id="RHEA:20792"/>
        <dbReference type="Rhea" id="RHEA-COMP:9696"/>
        <dbReference type="Rhea" id="RHEA-COMP:9697"/>
        <dbReference type="ChEBI" id="CHEBI:30616"/>
        <dbReference type="ChEBI" id="CHEBI:32551"/>
        <dbReference type="ChEBI" id="CHEBI:33019"/>
        <dbReference type="ChEBI" id="CHEBI:78442"/>
        <dbReference type="ChEBI" id="CHEBI:78529"/>
        <dbReference type="ChEBI" id="CHEBI:456215"/>
        <dbReference type="EC" id="6.1.1.6"/>
    </reaction>
</comment>
<comment type="cofactor">
    <cofactor evidence="1">
        <name>Mg(2+)</name>
        <dbReference type="ChEBI" id="CHEBI:18420"/>
    </cofactor>
    <text evidence="1">Binds 3 Mg(2+) ions per subunit.</text>
</comment>
<comment type="subunit">
    <text evidence="1">Homodimer.</text>
</comment>
<comment type="subcellular location">
    <subcellularLocation>
        <location evidence="1">Cytoplasm</location>
    </subcellularLocation>
</comment>
<comment type="similarity">
    <text evidence="1">Belongs to the class-II aminoacyl-tRNA synthetase family.</text>
</comment>
<evidence type="ECO:0000255" key="1">
    <source>
        <dbReference type="HAMAP-Rule" id="MF_00252"/>
    </source>
</evidence>